<accession>Q5HG83</accession>
<reference key="1">
    <citation type="journal article" date="2005" name="J. Bacteriol.">
        <title>Insights on evolution of virulence and resistance from the complete genome analysis of an early methicillin-resistant Staphylococcus aureus strain and a biofilm-producing methicillin-resistant Staphylococcus epidermidis strain.</title>
        <authorList>
            <person name="Gill S.R."/>
            <person name="Fouts D.E."/>
            <person name="Archer G.L."/>
            <person name="Mongodin E.F."/>
            <person name="DeBoy R.T."/>
            <person name="Ravel J."/>
            <person name="Paulsen I.T."/>
            <person name="Kolonay J.F."/>
            <person name="Brinkac L.M."/>
            <person name="Beanan M.J."/>
            <person name="Dodson R.J."/>
            <person name="Daugherty S.C."/>
            <person name="Madupu R."/>
            <person name="Angiuoli S.V."/>
            <person name="Durkin A.S."/>
            <person name="Haft D.H."/>
            <person name="Vamathevan J.J."/>
            <person name="Khouri H."/>
            <person name="Utterback T.R."/>
            <person name="Lee C."/>
            <person name="Dimitrov G."/>
            <person name="Jiang L."/>
            <person name="Qin H."/>
            <person name="Weidman J."/>
            <person name="Tran K."/>
            <person name="Kang K.H."/>
            <person name="Hance I.R."/>
            <person name="Nelson K.E."/>
            <person name="Fraser C.M."/>
        </authorList>
    </citation>
    <scope>NUCLEOTIDE SEQUENCE [LARGE SCALE GENOMIC DNA]</scope>
    <source>
        <strain>COL</strain>
    </source>
</reference>
<sequence length="325" mass="36116">MKIFDYEDIQLIPNKCIVESRSECDTTIQFGPKKFKLPVVPANMQTVMNEKLAKWFAENDYFYIMHRFDEEARIPFIKHMQNSGLFASISVGVKKAEFDFIEKLAQEKLIPEYITIDIAHGHSDSVINMIKHIKTHIPDSFVIAGNVGTPEGVRELENAGADATKVGIGPGRVCITKIKTGFGTGGWQLAALNICSKAARKPLIADGGIRTHGDIAKSIRFGASMVMIGSLFAAHEESPGETVELDGKQYKEYFGSASEFQKGEHKNVEGKKMFVEHKGSLMDTLKEMQQDLQSSISYAGGKDLKSLRTVDYVIVRNSIFNGDRD</sequence>
<keyword id="KW-0521">NADP</keyword>
<keyword id="KW-0560">Oxidoreductase</keyword>
<evidence type="ECO:0000255" key="1">
    <source>
        <dbReference type="HAMAP-Rule" id="MF_01511"/>
    </source>
</evidence>
<protein>
    <recommendedName>
        <fullName evidence="1">GMP reductase</fullName>
        <ecNumber evidence="1">1.7.1.7</ecNumber>
    </recommendedName>
    <alternativeName>
        <fullName evidence="1">Guanosine 5'-monophosphate oxidoreductase</fullName>
        <shortName evidence="1">Guanosine monophosphate reductase</shortName>
    </alternativeName>
</protein>
<dbReference type="EC" id="1.7.1.7" evidence="1"/>
<dbReference type="EMBL" id="CP000046">
    <property type="protein sequence ID" value="AAW36620.1"/>
    <property type="molecule type" value="Genomic_DNA"/>
</dbReference>
<dbReference type="RefSeq" id="WP_000688126.1">
    <property type="nucleotide sequence ID" value="NZ_JBGOFO010000002.1"/>
</dbReference>
<dbReference type="SMR" id="Q5HG83"/>
<dbReference type="KEGG" id="sac:SACOL1371"/>
<dbReference type="HOGENOM" id="CLU_022552_5_0_9"/>
<dbReference type="Proteomes" id="UP000000530">
    <property type="component" value="Chromosome"/>
</dbReference>
<dbReference type="GO" id="GO:0005829">
    <property type="term" value="C:cytosol"/>
    <property type="evidence" value="ECO:0007669"/>
    <property type="project" value="TreeGrafter"/>
</dbReference>
<dbReference type="GO" id="GO:1902560">
    <property type="term" value="C:GMP reductase complex"/>
    <property type="evidence" value="ECO:0007669"/>
    <property type="project" value="InterPro"/>
</dbReference>
<dbReference type="GO" id="GO:0003920">
    <property type="term" value="F:GMP reductase activity"/>
    <property type="evidence" value="ECO:0007669"/>
    <property type="project" value="UniProtKB-UniRule"/>
</dbReference>
<dbReference type="GO" id="GO:0006163">
    <property type="term" value="P:purine nucleotide metabolic process"/>
    <property type="evidence" value="ECO:0007669"/>
    <property type="project" value="UniProtKB-UniRule"/>
</dbReference>
<dbReference type="CDD" id="cd00381">
    <property type="entry name" value="IMPDH"/>
    <property type="match status" value="1"/>
</dbReference>
<dbReference type="FunFam" id="3.20.20.70:FF:000079">
    <property type="entry name" value="GMP reductase"/>
    <property type="match status" value="1"/>
</dbReference>
<dbReference type="Gene3D" id="3.20.20.70">
    <property type="entry name" value="Aldolase class I"/>
    <property type="match status" value="1"/>
</dbReference>
<dbReference type="HAMAP" id="MF_01511">
    <property type="entry name" value="GMP_reduct_type2"/>
    <property type="match status" value="1"/>
</dbReference>
<dbReference type="InterPro" id="IPR013785">
    <property type="entry name" value="Aldolase_TIM"/>
</dbReference>
<dbReference type="InterPro" id="IPR050139">
    <property type="entry name" value="GMP_reductase"/>
</dbReference>
<dbReference type="InterPro" id="IPR005994">
    <property type="entry name" value="GuaC_type_2"/>
</dbReference>
<dbReference type="InterPro" id="IPR015875">
    <property type="entry name" value="IMP_DH/GMP_Rdtase_CS"/>
</dbReference>
<dbReference type="InterPro" id="IPR001093">
    <property type="entry name" value="IMP_DH_GMPRt"/>
</dbReference>
<dbReference type="NCBIfam" id="TIGR01306">
    <property type="entry name" value="GMP_reduct_2"/>
    <property type="match status" value="1"/>
</dbReference>
<dbReference type="NCBIfam" id="NF003966">
    <property type="entry name" value="PRK05458.1"/>
    <property type="match status" value="1"/>
</dbReference>
<dbReference type="PANTHER" id="PTHR43170">
    <property type="entry name" value="GMP REDUCTASE"/>
    <property type="match status" value="1"/>
</dbReference>
<dbReference type="PANTHER" id="PTHR43170:SF5">
    <property type="entry name" value="GMP REDUCTASE"/>
    <property type="match status" value="1"/>
</dbReference>
<dbReference type="Pfam" id="PF00478">
    <property type="entry name" value="IMPDH"/>
    <property type="match status" value="1"/>
</dbReference>
<dbReference type="PIRSF" id="PIRSF036500">
    <property type="entry name" value="GMP_red_Firmic"/>
    <property type="match status" value="1"/>
</dbReference>
<dbReference type="SMART" id="SM01240">
    <property type="entry name" value="IMPDH"/>
    <property type="match status" value="1"/>
</dbReference>
<dbReference type="SUPFAM" id="SSF51412">
    <property type="entry name" value="Inosine monophosphate dehydrogenase (IMPDH)"/>
    <property type="match status" value="1"/>
</dbReference>
<dbReference type="PROSITE" id="PS00487">
    <property type="entry name" value="IMP_DH_GMP_RED"/>
    <property type="match status" value="1"/>
</dbReference>
<name>GUAC_STAAC</name>
<organism>
    <name type="scientific">Staphylococcus aureus (strain COL)</name>
    <dbReference type="NCBI Taxonomy" id="93062"/>
    <lineage>
        <taxon>Bacteria</taxon>
        <taxon>Bacillati</taxon>
        <taxon>Bacillota</taxon>
        <taxon>Bacilli</taxon>
        <taxon>Bacillales</taxon>
        <taxon>Staphylococcaceae</taxon>
        <taxon>Staphylococcus</taxon>
    </lineage>
</organism>
<comment type="function">
    <text evidence="1">Catalyzes the irreversible NADPH-dependent deamination of GMP to IMP. It functions in the conversion of nucleobase, nucleoside and nucleotide derivatives of G to A nucleotides, and in maintaining the intracellular balance of A and G nucleotides.</text>
</comment>
<comment type="catalytic activity">
    <reaction evidence="1">
        <text>IMP + NH4(+) + NADP(+) = GMP + NADPH + 2 H(+)</text>
        <dbReference type="Rhea" id="RHEA:17185"/>
        <dbReference type="ChEBI" id="CHEBI:15378"/>
        <dbReference type="ChEBI" id="CHEBI:28938"/>
        <dbReference type="ChEBI" id="CHEBI:57783"/>
        <dbReference type="ChEBI" id="CHEBI:58053"/>
        <dbReference type="ChEBI" id="CHEBI:58115"/>
        <dbReference type="ChEBI" id="CHEBI:58349"/>
        <dbReference type="EC" id="1.7.1.7"/>
    </reaction>
</comment>
<comment type="similarity">
    <text evidence="1">Belongs to the IMPDH/GMPR family. GuaC type 2 subfamily.</text>
</comment>
<proteinExistence type="inferred from homology"/>
<feature type="chain" id="PRO_0000093763" description="GMP reductase">
    <location>
        <begin position="1"/>
        <end position="325"/>
    </location>
</feature>
<feature type="active site" description="Thioimidate intermediate" evidence="1">
    <location>
        <position position="174"/>
    </location>
</feature>
<feature type="binding site" evidence="1">
    <location>
        <begin position="203"/>
        <end position="226"/>
    </location>
    <ligand>
        <name>NADP(+)</name>
        <dbReference type="ChEBI" id="CHEBI:58349"/>
    </ligand>
</feature>
<gene>
    <name evidence="1" type="primary">guaC</name>
    <name type="ordered locus">SACOL1371</name>
</gene>